<dbReference type="EMBL" id="CP017630">
    <property type="protein sequence ID" value="AOW31119.1"/>
    <property type="molecule type" value="Genomic_DNA"/>
</dbReference>
<dbReference type="RefSeq" id="XP_715128.2">
    <property type="nucleotide sequence ID" value="XM_710035.2"/>
</dbReference>
<dbReference type="FunCoup" id="Q5A061">
    <property type="interactions" value="154"/>
</dbReference>
<dbReference type="STRING" id="237561.Q5A061"/>
<dbReference type="EnsemblFungi" id="CR_03810W_A-T">
    <property type="protein sequence ID" value="CR_03810W_A-T-p1"/>
    <property type="gene ID" value="CR_03810W_A"/>
</dbReference>
<dbReference type="GeneID" id="3643194"/>
<dbReference type="KEGG" id="cal:CAALFM_CR03810WA"/>
<dbReference type="CGD" id="CAL0000185129">
    <property type="gene designation" value="PRP13"/>
</dbReference>
<dbReference type="VEuPathDB" id="FungiDB:CR_03810W_A"/>
<dbReference type="eggNOG" id="ENOG502QS0P">
    <property type="taxonomic scope" value="Eukaryota"/>
</dbReference>
<dbReference type="HOGENOM" id="CLU_007861_1_0_1"/>
<dbReference type="InParanoid" id="Q5A061"/>
<dbReference type="OrthoDB" id="10267654at2759"/>
<dbReference type="PRO" id="PR:Q5A061"/>
<dbReference type="Proteomes" id="UP000000559">
    <property type="component" value="Chromosome R"/>
</dbReference>
<dbReference type="GO" id="GO:0005743">
    <property type="term" value="C:mitochondrial inner membrane"/>
    <property type="evidence" value="ECO:0000318"/>
    <property type="project" value="GO_Central"/>
</dbReference>
<dbReference type="GO" id="GO:0003723">
    <property type="term" value="F:RNA binding"/>
    <property type="evidence" value="ECO:0007669"/>
    <property type="project" value="UniProtKB-KW"/>
</dbReference>
<dbReference type="GO" id="GO:0000002">
    <property type="term" value="P:mitochondrial genome maintenance"/>
    <property type="evidence" value="ECO:0000318"/>
    <property type="project" value="GO_Central"/>
</dbReference>
<dbReference type="GO" id="GO:0006397">
    <property type="term" value="P:mRNA processing"/>
    <property type="evidence" value="ECO:0007669"/>
    <property type="project" value="UniProtKB-KW"/>
</dbReference>
<dbReference type="CDD" id="cd12433">
    <property type="entry name" value="RRM_Yme2p_like"/>
    <property type="match status" value="1"/>
</dbReference>
<dbReference type="InterPro" id="IPR018850">
    <property type="entry name" value="Mt_escape_2_C"/>
</dbReference>
<dbReference type="InterPro" id="IPR035979">
    <property type="entry name" value="RBD_domain_sf"/>
</dbReference>
<dbReference type="InterPro" id="IPR039627">
    <property type="entry name" value="Yme2_C"/>
</dbReference>
<dbReference type="InterPro" id="IPR034260">
    <property type="entry name" value="Yme2_RRM"/>
</dbReference>
<dbReference type="PANTHER" id="PTHR32198">
    <property type="entry name" value="MITOCHONDRIAL ESCAPE PROTEIN 2"/>
    <property type="match status" value="1"/>
</dbReference>
<dbReference type="PANTHER" id="PTHR32198:SF2">
    <property type="entry name" value="MITOCHONDRIAL ESCAPE PROTEIN 2"/>
    <property type="match status" value="1"/>
</dbReference>
<dbReference type="Pfam" id="PF10443">
    <property type="entry name" value="RNA12"/>
    <property type="match status" value="1"/>
</dbReference>
<dbReference type="SUPFAM" id="SSF54928">
    <property type="entry name" value="RNA-binding domain, RBD"/>
    <property type="match status" value="1"/>
</dbReference>
<evidence type="ECO:0000250" key="1"/>
<evidence type="ECO:0000255" key="2"/>
<evidence type="ECO:0000305" key="3"/>
<accession>Q5A061</accession>
<accession>A0A1D8PSM3</accession>
<accession>Q5A009</accession>
<accession>Q5A037</accession>
<accession>Q5A089</accession>
<name>YME2_CANAL</name>
<proteinExistence type="inferred from homology"/>
<feature type="transit peptide" description="Mitochondrion" evidence="2">
    <location>
        <begin position="1"/>
        <end position="25"/>
    </location>
</feature>
<feature type="chain" id="PRO_0000343116" description="Mitochondrial escape protein 2">
    <location>
        <begin position="26"/>
        <end position="867"/>
    </location>
</feature>
<feature type="topological domain" description="Mitochondrial matrix" evidence="2">
    <location>
        <begin position="26"/>
        <end position="279"/>
    </location>
</feature>
<feature type="transmembrane region" description="Helical" evidence="2">
    <location>
        <begin position="280"/>
        <end position="300"/>
    </location>
</feature>
<feature type="topological domain" description="Mitochondrial intermembrane" evidence="2">
    <location>
        <begin position="301"/>
        <end position="867"/>
    </location>
</feature>
<feature type="domain" description="RRM">
    <location>
        <begin position="179"/>
        <end position="264"/>
    </location>
</feature>
<feature type="coiled-coil region" evidence="2">
    <location>
        <begin position="795"/>
        <end position="852"/>
    </location>
</feature>
<sequence>MIIRTLRSQLRLPKPVYISPPCRYYSTDLEKLKKESDTTESDNSASATGVIDKTHNEVLLYYDHIYPFTTSRNVVKQYLSRFSLPWSTAYDDEKLKQKVWDLSSPLETTAKITEFVPLRRDCGAFVKFKYPPEVPATKFIEEIRENVEKNEQERVNSNILTKLYHQIWRNVPKVYSVKGTPWIEDLRRFPSPKLSVKFEGDPLTEEELYVLFRRYGLINEIEPGATEAFIYFHSTRAAISAKHCITGMVLNGGKTTLHIQFVAIKRSNFLVSLISNHTKIAIPVLIALLATFAVLIFDPIREWFIEYKILHNRKSFDQFKESRWFKYLYIPYRTITGWVYSSYDYIDSQIQEVTGSSCSEEDDSSNGSNIVDGQSVRDLKNESNMFWIERYEKSKQLQLWIMENANTFIIVKGPQGSGKEEFVLEHSLGSDERLNKKVLVLECDQLGKARSDNNLINTTASQLGYFPVFTWTNTVSRFVDLGVQGLTGQKSGLSESKETQIKNMFSLATQAIRKITTNEYNKYVKSVERRNKRLKDDEKIEVLKEEQFLQQHPEAKPIIVLNKYSRRADVSSNDFIPPLVADWASGLVQNNTAHVIFLTADVGSLQLLNDALPNQVFKDISLSDASMSSSRQYVCDVLKVKDTSTLDECLEPLGGRMLDLQSFIRRIKSGESPQQAINEMISQAAELINTFFLNSHHKFGAGDSNWDPSQVWLIMKLLSECDTINYSELVKSPLFKVSKETLEILTTLEKYDLISLKRDKGVLDKISTGRPLFKAAFANIISDLRIWKLYETEYIGRLISLEAAKIQKLEEELEKIYKIGKVDGRIDYVSQKIEASNKKILDLEKQAADVASYTGKPDGKSFLGIKF</sequence>
<reference key="1">
    <citation type="journal article" date="2004" name="Proc. Natl. Acad. Sci. U.S.A.">
        <title>The diploid genome sequence of Candida albicans.</title>
        <authorList>
            <person name="Jones T."/>
            <person name="Federspiel N.A."/>
            <person name="Chibana H."/>
            <person name="Dungan J."/>
            <person name="Kalman S."/>
            <person name="Magee B.B."/>
            <person name="Newport G."/>
            <person name="Thorstenson Y.R."/>
            <person name="Agabian N."/>
            <person name="Magee P.T."/>
            <person name="Davis R.W."/>
            <person name="Scherer S."/>
        </authorList>
    </citation>
    <scope>NUCLEOTIDE SEQUENCE [LARGE SCALE GENOMIC DNA]</scope>
    <source>
        <strain>SC5314 / ATCC MYA-2876</strain>
    </source>
</reference>
<reference key="2">
    <citation type="journal article" date="2007" name="Genome Biol.">
        <title>Assembly of the Candida albicans genome into sixteen supercontigs aligned on the eight chromosomes.</title>
        <authorList>
            <person name="van het Hoog M."/>
            <person name="Rast T.J."/>
            <person name="Martchenko M."/>
            <person name="Grindle S."/>
            <person name="Dignard D."/>
            <person name="Hogues H."/>
            <person name="Cuomo C."/>
            <person name="Berriman M."/>
            <person name="Scherer S."/>
            <person name="Magee B.B."/>
            <person name="Whiteway M."/>
            <person name="Chibana H."/>
            <person name="Nantel A."/>
            <person name="Magee P.T."/>
        </authorList>
    </citation>
    <scope>GENOME REANNOTATION</scope>
    <source>
        <strain>SC5314 / ATCC MYA-2876</strain>
    </source>
</reference>
<reference key="3">
    <citation type="journal article" date="2013" name="Genome Biol.">
        <title>Assembly of a phased diploid Candida albicans genome facilitates allele-specific measurements and provides a simple model for repeat and indel structure.</title>
        <authorList>
            <person name="Muzzey D."/>
            <person name="Schwartz K."/>
            <person name="Weissman J.S."/>
            <person name="Sherlock G."/>
        </authorList>
    </citation>
    <scope>NUCLEOTIDE SEQUENCE [LARGE SCALE GENOMIC DNA]</scope>
    <scope>GENOME REANNOTATION</scope>
    <source>
        <strain>SC5314 / ATCC MYA-2876</strain>
    </source>
</reference>
<gene>
    <name type="primary">PRP13</name>
    <name type="synonym">PRP12</name>
    <name type="synonym">PRP121</name>
    <name type="synonym">PRP122</name>
    <name type="synonym">YME2</name>
    <name type="ordered locus">CAALFM_CR03810WA</name>
    <name type="ORF">CaO19.11829</name>
    <name type="ORF">CaO19.11857</name>
    <name type="ORF">CaO19.4351</name>
    <name type="ORF">CaO19.4379</name>
</gene>
<comment type="function">
    <text evidence="1">Plays a role in maintaining the mitochondrial genome and in controlling the mtDNA escape. Involved in the regulation of mtDNA nucleotide structure and number. May have a dispensable role in early maturation of pre-rRNA (By similarity).</text>
</comment>
<comment type="subcellular location">
    <subcellularLocation>
        <location evidence="1">Mitochondrion inner membrane</location>
        <topology evidence="1">Single-pass membrane protein</topology>
    </subcellularLocation>
</comment>
<comment type="similarity">
    <text evidence="3">Belongs to the YME2 family.</text>
</comment>
<keyword id="KW-0175">Coiled coil</keyword>
<keyword id="KW-0472">Membrane</keyword>
<keyword id="KW-0496">Mitochondrion</keyword>
<keyword id="KW-0999">Mitochondrion inner membrane</keyword>
<keyword id="KW-0507">mRNA processing</keyword>
<keyword id="KW-1185">Reference proteome</keyword>
<keyword id="KW-0694">RNA-binding</keyword>
<keyword id="KW-0809">Transit peptide</keyword>
<keyword id="KW-0812">Transmembrane</keyword>
<keyword id="KW-1133">Transmembrane helix</keyword>
<protein>
    <recommendedName>
        <fullName>Mitochondrial escape protein 2</fullName>
    </recommendedName>
</protein>
<organism>
    <name type="scientific">Candida albicans (strain SC5314 / ATCC MYA-2876)</name>
    <name type="common">Yeast</name>
    <dbReference type="NCBI Taxonomy" id="237561"/>
    <lineage>
        <taxon>Eukaryota</taxon>
        <taxon>Fungi</taxon>
        <taxon>Dikarya</taxon>
        <taxon>Ascomycota</taxon>
        <taxon>Saccharomycotina</taxon>
        <taxon>Pichiomycetes</taxon>
        <taxon>Debaryomycetaceae</taxon>
        <taxon>Candida/Lodderomyces clade</taxon>
        <taxon>Candida</taxon>
    </lineage>
</organism>